<name>RS14_SHISS</name>
<reference key="1">
    <citation type="journal article" date="2005" name="Nucleic Acids Res.">
        <title>Genome dynamics and diversity of Shigella species, the etiologic agents of bacillary dysentery.</title>
        <authorList>
            <person name="Yang F."/>
            <person name="Yang J."/>
            <person name="Zhang X."/>
            <person name="Chen L."/>
            <person name="Jiang Y."/>
            <person name="Yan Y."/>
            <person name="Tang X."/>
            <person name="Wang J."/>
            <person name="Xiong Z."/>
            <person name="Dong J."/>
            <person name="Xue Y."/>
            <person name="Zhu Y."/>
            <person name="Xu X."/>
            <person name="Sun L."/>
            <person name="Chen S."/>
            <person name="Nie H."/>
            <person name="Peng J."/>
            <person name="Xu J."/>
            <person name="Wang Y."/>
            <person name="Yuan Z."/>
            <person name="Wen Y."/>
            <person name="Yao Z."/>
            <person name="Shen Y."/>
            <person name="Qiang B."/>
            <person name="Hou Y."/>
            <person name="Yu J."/>
            <person name="Jin Q."/>
        </authorList>
    </citation>
    <scope>NUCLEOTIDE SEQUENCE [LARGE SCALE GENOMIC DNA]</scope>
    <source>
        <strain>Ss046</strain>
    </source>
</reference>
<comment type="function">
    <text evidence="1">Binds 16S rRNA, required for the assembly of 30S particles and may also be responsible for determining the conformation of the 16S rRNA at the A site.</text>
</comment>
<comment type="subunit">
    <text evidence="1">Part of the 30S ribosomal subunit. Contacts proteins S3 and S10.</text>
</comment>
<comment type="similarity">
    <text evidence="1">Belongs to the universal ribosomal protein uS14 family.</text>
</comment>
<keyword id="KW-1185">Reference proteome</keyword>
<keyword id="KW-0687">Ribonucleoprotein</keyword>
<keyword id="KW-0689">Ribosomal protein</keyword>
<keyword id="KW-0694">RNA-binding</keyword>
<keyword id="KW-0699">rRNA-binding</keyword>
<gene>
    <name evidence="1" type="primary">rpsN</name>
    <name type="ordered locus">SSON_3448</name>
</gene>
<accession>Q3YWV2</accession>
<dbReference type="EMBL" id="CP000038">
    <property type="protein sequence ID" value="AAZ90010.1"/>
    <property type="molecule type" value="Genomic_DNA"/>
</dbReference>
<dbReference type="RefSeq" id="WP_001118930.1">
    <property type="nucleotide sequence ID" value="NC_007384.1"/>
</dbReference>
<dbReference type="SMR" id="Q3YWV2"/>
<dbReference type="GeneID" id="93778680"/>
<dbReference type="KEGG" id="ssn:SSON_3448"/>
<dbReference type="HOGENOM" id="CLU_139869_0_1_6"/>
<dbReference type="Proteomes" id="UP000002529">
    <property type="component" value="Chromosome"/>
</dbReference>
<dbReference type="GO" id="GO:0005737">
    <property type="term" value="C:cytoplasm"/>
    <property type="evidence" value="ECO:0007669"/>
    <property type="project" value="UniProtKB-ARBA"/>
</dbReference>
<dbReference type="GO" id="GO:0015935">
    <property type="term" value="C:small ribosomal subunit"/>
    <property type="evidence" value="ECO:0007669"/>
    <property type="project" value="TreeGrafter"/>
</dbReference>
<dbReference type="GO" id="GO:0019843">
    <property type="term" value="F:rRNA binding"/>
    <property type="evidence" value="ECO:0007669"/>
    <property type="project" value="UniProtKB-UniRule"/>
</dbReference>
<dbReference type="GO" id="GO:0003735">
    <property type="term" value="F:structural constituent of ribosome"/>
    <property type="evidence" value="ECO:0007669"/>
    <property type="project" value="InterPro"/>
</dbReference>
<dbReference type="GO" id="GO:0006412">
    <property type="term" value="P:translation"/>
    <property type="evidence" value="ECO:0007669"/>
    <property type="project" value="UniProtKB-UniRule"/>
</dbReference>
<dbReference type="FunFam" id="1.10.287.1480:FF:000001">
    <property type="entry name" value="30S ribosomal protein S14"/>
    <property type="match status" value="1"/>
</dbReference>
<dbReference type="Gene3D" id="1.10.287.1480">
    <property type="match status" value="1"/>
</dbReference>
<dbReference type="HAMAP" id="MF_00537">
    <property type="entry name" value="Ribosomal_uS14_1"/>
    <property type="match status" value="1"/>
</dbReference>
<dbReference type="InterPro" id="IPR001209">
    <property type="entry name" value="Ribosomal_uS14"/>
</dbReference>
<dbReference type="InterPro" id="IPR023036">
    <property type="entry name" value="Ribosomal_uS14_bac/plastid"/>
</dbReference>
<dbReference type="InterPro" id="IPR018271">
    <property type="entry name" value="Ribosomal_uS14_CS"/>
</dbReference>
<dbReference type="NCBIfam" id="NF006477">
    <property type="entry name" value="PRK08881.1"/>
    <property type="match status" value="1"/>
</dbReference>
<dbReference type="PANTHER" id="PTHR19836">
    <property type="entry name" value="30S RIBOSOMAL PROTEIN S14"/>
    <property type="match status" value="1"/>
</dbReference>
<dbReference type="PANTHER" id="PTHR19836:SF19">
    <property type="entry name" value="SMALL RIBOSOMAL SUBUNIT PROTEIN US14M"/>
    <property type="match status" value="1"/>
</dbReference>
<dbReference type="Pfam" id="PF00253">
    <property type="entry name" value="Ribosomal_S14"/>
    <property type="match status" value="1"/>
</dbReference>
<dbReference type="SUPFAM" id="SSF57716">
    <property type="entry name" value="Glucocorticoid receptor-like (DNA-binding domain)"/>
    <property type="match status" value="1"/>
</dbReference>
<dbReference type="PROSITE" id="PS00527">
    <property type="entry name" value="RIBOSOMAL_S14"/>
    <property type="match status" value="1"/>
</dbReference>
<sequence>MAKQSMKAREVKRVALADKYFAKRAELKAIISDVNASDEDRWNAVLKLQTLPRDSSPSRQRNRCRQTGRPHGFLRKFGLSRIKVREAAMRGEIPGLKKASW</sequence>
<evidence type="ECO:0000255" key="1">
    <source>
        <dbReference type="HAMAP-Rule" id="MF_00537"/>
    </source>
</evidence>
<evidence type="ECO:0000305" key="2"/>
<feature type="chain" id="PRO_1000128591" description="Small ribosomal subunit protein uS14">
    <location>
        <begin position="1"/>
        <end position="101"/>
    </location>
</feature>
<proteinExistence type="inferred from homology"/>
<organism>
    <name type="scientific">Shigella sonnei (strain Ss046)</name>
    <dbReference type="NCBI Taxonomy" id="300269"/>
    <lineage>
        <taxon>Bacteria</taxon>
        <taxon>Pseudomonadati</taxon>
        <taxon>Pseudomonadota</taxon>
        <taxon>Gammaproteobacteria</taxon>
        <taxon>Enterobacterales</taxon>
        <taxon>Enterobacteriaceae</taxon>
        <taxon>Shigella</taxon>
    </lineage>
</organism>
<protein>
    <recommendedName>
        <fullName evidence="1">Small ribosomal subunit protein uS14</fullName>
    </recommendedName>
    <alternativeName>
        <fullName evidence="2">30S ribosomal protein S14</fullName>
    </alternativeName>
</protein>